<sequence length="321" mass="35321">MVAAEENPESFFAAAPPLRDADAVAARLGEFIARNSSAAGAGGGGRRIVCVTSGGTTVPLEQRCVRYIDNFSSGHRGAASTEYFLKAGYAVIFLHRRGSCQPYCRFLPDDSFLKFFDVDAESKVQVAECHAPVVKKAIGDYCKAIEGGYLLKLPFTTIFEYLQLLKMVATSISSAGPLGMFYLAAAVSDFYVPWDSMAKHKIQSGGGPLDMRLSQVPKMLSVLRNQWAPLAFCISFKLETDSDILIQKADMALNKYKMNIVVANLLATYKEEVIIVTDKERSTIRKMNKDEDLEMQIIKILSQNHSKYICGSTNGCVQSPY</sequence>
<gene>
    <name type="ordered locus">Os02g0575200</name>
    <name type="ordered locus">LOC_Os02g36550</name>
    <name type="ORF">OsJ_07236</name>
    <name type="ORF">P0703B01.18</name>
</gene>
<protein>
    <recommendedName>
        <fullName>Phosphopantothenate--cysteine ligase 1</fullName>
        <ecNumber>6.3.2.5</ecNumber>
    </recommendedName>
    <alternativeName>
        <fullName>Phosphopantothenoylcysteine synthetase 1</fullName>
        <shortName>PPC synthetase 1</shortName>
    </alternativeName>
</protein>
<name>PPCS1_ORYSJ</name>
<proteinExistence type="evidence at transcript level"/>
<keyword id="KW-0173">Coenzyme A biosynthesis</keyword>
<keyword id="KW-0436">Ligase</keyword>
<keyword id="KW-1185">Reference proteome</keyword>
<comment type="function">
    <text evidence="1">Catalyzes the first step in the biosynthesis of coenzyme A from vitamin B5, where cysteine is conjugated to 4'-phosphopantothenate to form 4-phosphopantothenoylcysteine.</text>
</comment>
<comment type="catalytic activity">
    <reaction>
        <text>(R)-4'-phosphopantothenate + L-cysteine + CTP = N-[(R)-4-phosphopantothenoyl]-L-cysteine + CMP + diphosphate + H(+)</text>
        <dbReference type="Rhea" id="RHEA:19397"/>
        <dbReference type="ChEBI" id="CHEBI:10986"/>
        <dbReference type="ChEBI" id="CHEBI:15378"/>
        <dbReference type="ChEBI" id="CHEBI:33019"/>
        <dbReference type="ChEBI" id="CHEBI:35235"/>
        <dbReference type="ChEBI" id="CHEBI:37563"/>
        <dbReference type="ChEBI" id="CHEBI:59458"/>
        <dbReference type="ChEBI" id="CHEBI:60377"/>
        <dbReference type="EC" id="6.3.2.5"/>
    </reaction>
</comment>
<comment type="pathway">
    <text>Cofactor biosynthesis; coenzyme A biosynthesis; CoA from (R)-pantothenate: step 2/5.</text>
</comment>
<comment type="subunit">
    <text evidence="1">Homodimer.</text>
</comment>
<comment type="similarity">
    <text evidence="2">Belongs to the PPC synthetase family.</text>
</comment>
<reference key="1">
    <citation type="journal article" date="2005" name="Nature">
        <title>The map-based sequence of the rice genome.</title>
        <authorList>
            <consortium name="International rice genome sequencing project (IRGSP)"/>
        </authorList>
    </citation>
    <scope>NUCLEOTIDE SEQUENCE [LARGE SCALE GENOMIC DNA]</scope>
    <source>
        <strain>cv. Nipponbare</strain>
    </source>
</reference>
<reference key="2">
    <citation type="journal article" date="2008" name="Nucleic Acids Res.">
        <title>The rice annotation project database (RAP-DB): 2008 update.</title>
        <authorList>
            <consortium name="The rice annotation project (RAP)"/>
        </authorList>
    </citation>
    <scope>GENOME REANNOTATION</scope>
    <source>
        <strain>cv. Nipponbare</strain>
    </source>
</reference>
<reference key="3">
    <citation type="journal article" date="2013" name="Rice">
        <title>Improvement of the Oryza sativa Nipponbare reference genome using next generation sequence and optical map data.</title>
        <authorList>
            <person name="Kawahara Y."/>
            <person name="de la Bastide M."/>
            <person name="Hamilton J.P."/>
            <person name="Kanamori H."/>
            <person name="McCombie W.R."/>
            <person name="Ouyang S."/>
            <person name="Schwartz D.C."/>
            <person name="Tanaka T."/>
            <person name="Wu J."/>
            <person name="Zhou S."/>
            <person name="Childs K.L."/>
            <person name="Davidson R.M."/>
            <person name="Lin H."/>
            <person name="Quesada-Ocampo L."/>
            <person name="Vaillancourt B."/>
            <person name="Sakai H."/>
            <person name="Lee S.S."/>
            <person name="Kim J."/>
            <person name="Numa H."/>
            <person name="Itoh T."/>
            <person name="Buell C.R."/>
            <person name="Matsumoto T."/>
        </authorList>
    </citation>
    <scope>GENOME REANNOTATION</scope>
    <source>
        <strain>cv. Nipponbare</strain>
    </source>
</reference>
<reference key="4">
    <citation type="journal article" date="2005" name="PLoS Biol.">
        <title>The genomes of Oryza sativa: a history of duplications.</title>
        <authorList>
            <person name="Yu J."/>
            <person name="Wang J."/>
            <person name="Lin W."/>
            <person name="Li S."/>
            <person name="Li H."/>
            <person name="Zhou J."/>
            <person name="Ni P."/>
            <person name="Dong W."/>
            <person name="Hu S."/>
            <person name="Zeng C."/>
            <person name="Zhang J."/>
            <person name="Zhang Y."/>
            <person name="Li R."/>
            <person name="Xu Z."/>
            <person name="Li S."/>
            <person name="Li X."/>
            <person name="Zheng H."/>
            <person name="Cong L."/>
            <person name="Lin L."/>
            <person name="Yin J."/>
            <person name="Geng J."/>
            <person name="Li G."/>
            <person name="Shi J."/>
            <person name="Liu J."/>
            <person name="Lv H."/>
            <person name="Li J."/>
            <person name="Wang J."/>
            <person name="Deng Y."/>
            <person name="Ran L."/>
            <person name="Shi X."/>
            <person name="Wang X."/>
            <person name="Wu Q."/>
            <person name="Li C."/>
            <person name="Ren X."/>
            <person name="Wang J."/>
            <person name="Wang X."/>
            <person name="Li D."/>
            <person name="Liu D."/>
            <person name="Zhang X."/>
            <person name="Ji Z."/>
            <person name="Zhao W."/>
            <person name="Sun Y."/>
            <person name="Zhang Z."/>
            <person name="Bao J."/>
            <person name="Han Y."/>
            <person name="Dong L."/>
            <person name="Ji J."/>
            <person name="Chen P."/>
            <person name="Wu S."/>
            <person name="Liu J."/>
            <person name="Xiao Y."/>
            <person name="Bu D."/>
            <person name="Tan J."/>
            <person name="Yang L."/>
            <person name="Ye C."/>
            <person name="Zhang J."/>
            <person name="Xu J."/>
            <person name="Zhou Y."/>
            <person name="Yu Y."/>
            <person name="Zhang B."/>
            <person name="Zhuang S."/>
            <person name="Wei H."/>
            <person name="Liu B."/>
            <person name="Lei M."/>
            <person name="Yu H."/>
            <person name="Li Y."/>
            <person name="Xu H."/>
            <person name="Wei S."/>
            <person name="He X."/>
            <person name="Fang L."/>
            <person name="Zhang Z."/>
            <person name="Zhang Y."/>
            <person name="Huang X."/>
            <person name="Su Z."/>
            <person name="Tong W."/>
            <person name="Li J."/>
            <person name="Tong Z."/>
            <person name="Li S."/>
            <person name="Ye J."/>
            <person name="Wang L."/>
            <person name="Fang L."/>
            <person name="Lei T."/>
            <person name="Chen C.-S."/>
            <person name="Chen H.-C."/>
            <person name="Xu Z."/>
            <person name="Li H."/>
            <person name="Huang H."/>
            <person name="Zhang F."/>
            <person name="Xu H."/>
            <person name="Li N."/>
            <person name="Zhao C."/>
            <person name="Li S."/>
            <person name="Dong L."/>
            <person name="Huang Y."/>
            <person name="Li L."/>
            <person name="Xi Y."/>
            <person name="Qi Q."/>
            <person name="Li W."/>
            <person name="Zhang B."/>
            <person name="Hu W."/>
            <person name="Zhang Y."/>
            <person name="Tian X."/>
            <person name="Jiao Y."/>
            <person name="Liang X."/>
            <person name="Jin J."/>
            <person name="Gao L."/>
            <person name="Zheng W."/>
            <person name="Hao B."/>
            <person name="Liu S.-M."/>
            <person name="Wang W."/>
            <person name="Yuan L."/>
            <person name="Cao M."/>
            <person name="McDermott J."/>
            <person name="Samudrala R."/>
            <person name="Wang J."/>
            <person name="Wong G.K.-S."/>
            <person name="Yang H."/>
        </authorList>
    </citation>
    <scope>NUCLEOTIDE SEQUENCE [LARGE SCALE GENOMIC DNA]</scope>
    <source>
        <strain>cv. Nipponbare</strain>
    </source>
</reference>
<reference key="5">
    <citation type="journal article" date="2003" name="Science">
        <title>Collection, mapping, and annotation of over 28,000 cDNA clones from japonica rice.</title>
        <authorList>
            <consortium name="The rice full-length cDNA consortium"/>
        </authorList>
    </citation>
    <scope>NUCLEOTIDE SEQUENCE [LARGE SCALE MRNA]</scope>
    <source>
        <strain>cv. Nipponbare</strain>
    </source>
</reference>
<evidence type="ECO:0000250" key="1"/>
<evidence type="ECO:0000305" key="2"/>
<organism>
    <name type="scientific">Oryza sativa subsp. japonica</name>
    <name type="common">Rice</name>
    <dbReference type="NCBI Taxonomy" id="39947"/>
    <lineage>
        <taxon>Eukaryota</taxon>
        <taxon>Viridiplantae</taxon>
        <taxon>Streptophyta</taxon>
        <taxon>Embryophyta</taxon>
        <taxon>Tracheophyta</taxon>
        <taxon>Spermatophyta</taxon>
        <taxon>Magnoliopsida</taxon>
        <taxon>Liliopsida</taxon>
        <taxon>Poales</taxon>
        <taxon>Poaceae</taxon>
        <taxon>BOP clade</taxon>
        <taxon>Oryzoideae</taxon>
        <taxon>Oryzeae</taxon>
        <taxon>Oryzinae</taxon>
        <taxon>Oryza</taxon>
        <taxon>Oryza sativa</taxon>
    </lineage>
</organism>
<feature type="chain" id="PRO_0000429409" description="Phosphopantothenate--cysteine ligase 1">
    <location>
        <begin position="1"/>
        <end position="321"/>
    </location>
</feature>
<dbReference type="EC" id="6.3.2.5"/>
<dbReference type="EMBL" id="AP005116">
    <property type="protein sequence ID" value="BAD33352.1"/>
    <property type="molecule type" value="Genomic_DNA"/>
</dbReference>
<dbReference type="EMBL" id="AP008208">
    <property type="protein sequence ID" value="BAF09125.1"/>
    <property type="molecule type" value="Genomic_DNA"/>
</dbReference>
<dbReference type="EMBL" id="AP014958">
    <property type="protein sequence ID" value="BAS79374.1"/>
    <property type="molecule type" value="Genomic_DNA"/>
</dbReference>
<dbReference type="EMBL" id="CM000139">
    <property type="protein sequence ID" value="EEE57240.1"/>
    <property type="molecule type" value="Genomic_DNA"/>
</dbReference>
<dbReference type="EMBL" id="AK069567">
    <property type="protein sequence ID" value="BAG91492.1"/>
    <property type="molecule type" value="mRNA"/>
</dbReference>
<dbReference type="RefSeq" id="XP_015624140.1">
    <property type="nucleotide sequence ID" value="XM_015768654.1"/>
</dbReference>
<dbReference type="SMR" id="Q69S81"/>
<dbReference type="FunCoup" id="Q69S81">
    <property type="interactions" value="3433"/>
</dbReference>
<dbReference type="STRING" id="39947.Q69S81"/>
<dbReference type="PaxDb" id="39947-Q69S81"/>
<dbReference type="EnsemblPlants" id="Os02t0575200-01">
    <property type="protein sequence ID" value="Os02t0575200-01"/>
    <property type="gene ID" value="Os02g0575200"/>
</dbReference>
<dbReference type="Gramene" id="Os02t0575200-01">
    <property type="protein sequence ID" value="Os02t0575200-01"/>
    <property type="gene ID" value="Os02g0575200"/>
</dbReference>
<dbReference type="KEGG" id="dosa:Os02g0575200"/>
<dbReference type="eggNOG" id="KOG2728">
    <property type="taxonomic scope" value="Eukaryota"/>
</dbReference>
<dbReference type="HOGENOM" id="CLU_042326_0_1_1"/>
<dbReference type="InParanoid" id="Q69S81"/>
<dbReference type="OMA" id="NTIRRCN"/>
<dbReference type="OrthoDB" id="70224at2759"/>
<dbReference type="UniPathway" id="UPA00241">
    <property type="reaction ID" value="UER00353"/>
</dbReference>
<dbReference type="Proteomes" id="UP000000763">
    <property type="component" value="Chromosome 2"/>
</dbReference>
<dbReference type="Proteomes" id="UP000007752">
    <property type="component" value="Chromosome 2"/>
</dbReference>
<dbReference type="Proteomes" id="UP000059680">
    <property type="component" value="Chromosome 2"/>
</dbReference>
<dbReference type="GO" id="GO:0005737">
    <property type="term" value="C:cytoplasm"/>
    <property type="evidence" value="ECO:0000318"/>
    <property type="project" value="GO_Central"/>
</dbReference>
<dbReference type="GO" id="GO:0005634">
    <property type="term" value="C:nucleus"/>
    <property type="evidence" value="ECO:0000318"/>
    <property type="project" value="GO_Central"/>
</dbReference>
<dbReference type="GO" id="GO:0004632">
    <property type="term" value="F:phosphopantothenate--cysteine ligase activity"/>
    <property type="evidence" value="ECO:0000318"/>
    <property type="project" value="GO_Central"/>
</dbReference>
<dbReference type="GO" id="GO:0015937">
    <property type="term" value="P:coenzyme A biosynthetic process"/>
    <property type="evidence" value="ECO:0000318"/>
    <property type="project" value="GO_Central"/>
</dbReference>
<dbReference type="FunFam" id="3.40.50.10300:FF:000002">
    <property type="entry name" value="Phosphopantothenate--cysteine ligase 2"/>
    <property type="match status" value="1"/>
</dbReference>
<dbReference type="Gene3D" id="3.40.50.10300">
    <property type="entry name" value="CoaB-like"/>
    <property type="match status" value="1"/>
</dbReference>
<dbReference type="InterPro" id="IPR035929">
    <property type="entry name" value="CoaB-like_sf"/>
</dbReference>
<dbReference type="InterPro" id="IPR007085">
    <property type="entry name" value="DNA/pantothenate-metab_flavo_C"/>
</dbReference>
<dbReference type="PANTHER" id="PTHR12290">
    <property type="entry name" value="CORNICHON-RELATED"/>
    <property type="match status" value="1"/>
</dbReference>
<dbReference type="Pfam" id="PF04127">
    <property type="entry name" value="DFP"/>
    <property type="match status" value="2"/>
</dbReference>
<dbReference type="SUPFAM" id="SSF102645">
    <property type="entry name" value="CoaB-like"/>
    <property type="match status" value="1"/>
</dbReference>
<accession>Q69S81</accession>
<accession>A0A0P0VKL9</accession>